<comment type="function">
    <text evidence="2">DNA-binding protein exhibiting the ability to bind to both single-stranded and double-stranded DNA.</text>
</comment>
<comment type="subunit">
    <text evidence="2">Homohexamer; trimer of dimers, that forms a hollow cage-like architecture.</text>
</comment>
<comment type="similarity">
    <text evidence="3">Belongs to the GTP cyclohydrolase I type 2/NIF3 family.</text>
</comment>
<comment type="sequence caution" evidence="3">
    <conflict type="erroneous initiation">
        <sequence resource="EMBL-CDS" id="AAB98929"/>
    </conflict>
</comment>
<sequence>MKAKEIIEFIETFAPKDLAIEGDNIGLQVGDNLDKEIKKLGIALDPSLSVIKKAEKEGVDFLFTHHPLLKDPIRNFTGVIYKKLKILMENDIILYSAHTNLDICKNGLNDALAELYNLENPKPLYDNGLGRVGIFKGSFEEFLEITKKYIHKNPIVVKSKEVDDNFKLAVLSGYGLSQSSIKYVAEKADVYLSGDLTHHSKILAEELGLVVVDATHYSTEVFGLKKFKEFLSSNLDLEIISLDF</sequence>
<proteinExistence type="evidence at protein level"/>
<accession>Q58337</accession>
<reference key="1">
    <citation type="journal article" date="1996" name="Science">
        <title>Complete genome sequence of the methanogenic archaeon, Methanococcus jannaschii.</title>
        <authorList>
            <person name="Bult C.J."/>
            <person name="White O."/>
            <person name="Olsen G.J."/>
            <person name="Zhou L."/>
            <person name="Fleischmann R.D."/>
            <person name="Sutton G.G."/>
            <person name="Blake J.A."/>
            <person name="FitzGerald L.M."/>
            <person name="Clayton R.A."/>
            <person name="Gocayne J.D."/>
            <person name="Kerlavage A.R."/>
            <person name="Dougherty B.A."/>
            <person name="Tomb J.-F."/>
            <person name="Adams M.D."/>
            <person name="Reich C.I."/>
            <person name="Overbeek R."/>
            <person name="Kirkness E.F."/>
            <person name="Weinstock K.G."/>
            <person name="Merrick J.M."/>
            <person name="Glodek A."/>
            <person name="Scott J.L."/>
            <person name="Geoghagen N.S.M."/>
            <person name="Weidman J.F."/>
            <person name="Fuhrmann J.L."/>
            <person name="Nguyen D."/>
            <person name="Utterback T.R."/>
            <person name="Kelley J.M."/>
            <person name="Peterson J.D."/>
            <person name="Sadow P.W."/>
            <person name="Hanna M.C."/>
            <person name="Cotton M.D."/>
            <person name="Roberts K.M."/>
            <person name="Hurst M.A."/>
            <person name="Kaine B.P."/>
            <person name="Borodovsky M."/>
            <person name="Klenk H.-P."/>
            <person name="Fraser C.M."/>
            <person name="Smith H.O."/>
            <person name="Woese C.R."/>
            <person name="Venter J.C."/>
        </authorList>
    </citation>
    <scope>NUCLEOTIDE SEQUENCE [LARGE SCALE GENOMIC DNA]</scope>
    <source>
        <strain>ATCC 43067 / DSM 2661 / JAL-1 / JCM 10045 / NBRC 100440</strain>
    </source>
</reference>
<reference key="2">
    <citation type="journal article" date="2013" name="Acta Crystallogr. F">
        <title>Crystallization and preliminary X-ray diffraction analysis of the Nif3-family protein MJ0927 from Methanocaldococcus jannaschii.</title>
        <authorList>
            <person name="Kuan S.M."/>
            <person name="Chen H.C."/>
            <person name="Huang C.H."/>
            <person name="Chang C.H."/>
            <person name="Chen S.C."/>
            <person name="Yang C.S."/>
            <person name="Chen Y."/>
        </authorList>
    </citation>
    <scope>CRYSTALLIZATION</scope>
</reference>
<reference key="3">
    <citation type="journal article" date="2014" name="Biomed. Res. Int.">
        <title>Crystal structure of a conserved hypothetical protein MJ0927 from Methanocaldococcus jannaschii reveals a novel quaternary assembly in the Nif3 family.</title>
        <authorList>
            <person name="Chen S.C."/>
            <person name="Huang C.H."/>
            <person name="Yang C.S."/>
            <person name="Kuan S.M."/>
            <person name="Lin C.T."/>
            <person name="Chou S.H."/>
            <person name="Chen Y."/>
        </authorList>
    </citation>
    <scope>X-RAY CRYSTALLOGRAPHY (2.47 ANGSTROMS)</scope>
    <scope>DNA-BINDING</scope>
</reference>
<dbReference type="EMBL" id="L77117">
    <property type="protein sequence ID" value="AAB98929.1"/>
    <property type="status" value="ALT_INIT"/>
    <property type="molecule type" value="Genomic_DNA"/>
</dbReference>
<dbReference type="PIR" id="G64415">
    <property type="entry name" value="G64415"/>
</dbReference>
<dbReference type="RefSeq" id="WP_064496667.1">
    <property type="nucleotide sequence ID" value="NC_000909.1"/>
</dbReference>
<dbReference type="PDB" id="4IWG">
    <property type="method" value="X-ray"/>
    <property type="resolution" value="2.47 A"/>
    <property type="chains" value="A/B/C=1-244"/>
</dbReference>
<dbReference type="PDB" id="4IWM">
    <property type="method" value="X-ray"/>
    <property type="resolution" value="2.70 A"/>
    <property type="chains" value="A/B/C/D/E/F=1-244"/>
</dbReference>
<dbReference type="PDBsum" id="4IWG"/>
<dbReference type="PDBsum" id="4IWM"/>
<dbReference type="SMR" id="Q58337"/>
<dbReference type="FunCoup" id="Q58337">
    <property type="interactions" value="99"/>
</dbReference>
<dbReference type="MINT" id="Q58337"/>
<dbReference type="STRING" id="243232.MJ_0927"/>
<dbReference type="PaxDb" id="243232-MJ_0927"/>
<dbReference type="EnsemblBacteria" id="AAB98929">
    <property type="protein sequence ID" value="AAB98929"/>
    <property type="gene ID" value="MJ_0927"/>
</dbReference>
<dbReference type="GeneID" id="1451816"/>
<dbReference type="KEGG" id="mja:MJ_0927"/>
<dbReference type="eggNOG" id="arCOG04454">
    <property type="taxonomic scope" value="Archaea"/>
</dbReference>
<dbReference type="HOGENOM" id="CLU_037423_2_0_2"/>
<dbReference type="InParanoid" id="Q58337"/>
<dbReference type="OrthoDB" id="85198at2157"/>
<dbReference type="PhylomeDB" id="Q58337"/>
<dbReference type="EvolutionaryTrace" id="Q58337"/>
<dbReference type="Proteomes" id="UP000000805">
    <property type="component" value="Chromosome"/>
</dbReference>
<dbReference type="GO" id="GO:0005737">
    <property type="term" value="C:cytoplasm"/>
    <property type="evidence" value="ECO:0000318"/>
    <property type="project" value="GO_Central"/>
</dbReference>
<dbReference type="GO" id="GO:0003677">
    <property type="term" value="F:DNA binding"/>
    <property type="evidence" value="ECO:0007669"/>
    <property type="project" value="UniProtKB-KW"/>
</dbReference>
<dbReference type="GO" id="GO:0046872">
    <property type="term" value="F:metal ion binding"/>
    <property type="evidence" value="ECO:0007669"/>
    <property type="project" value="UniProtKB-KW"/>
</dbReference>
<dbReference type="FunFam" id="3.40.1390.30:FF:000001">
    <property type="entry name" value="GTP cyclohydrolase 1 type 2"/>
    <property type="match status" value="1"/>
</dbReference>
<dbReference type="Gene3D" id="3.40.1390.30">
    <property type="entry name" value="NIF3 (NGG1p interacting factor 3)-like"/>
    <property type="match status" value="2"/>
</dbReference>
<dbReference type="InterPro" id="IPR002678">
    <property type="entry name" value="DUF34/NIF3"/>
</dbReference>
<dbReference type="InterPro" id="IPR036069">
    <property type="entry name" value="DUF34/NIF3_sf"/>
</dbReference>
<dbReference type="NCBIfam" id="TIGR00486">
    <property type="entry name" value="YbgI_SA1388"/>
    <property type="match status" value="1"/>
</dbReference>
<dbReference type="PANTHER" id="PTHR13799:SF14">
    <property type="entry name" value="GTP CYCLOHYDROLASE 1 TYPE 2 HOMOLOG"/>
    <property type="match status" value="1"/>
</dbReference>
<dbReference type="PANTHER" id="PTHR13799">
    <property type="entry name" value="NGG1 INTERACTING FACTOR 3"/>
    <property type="match status" value="1"/>
</dbReference>
<dbReference type="Pfam" id="PF01784">
    <property type="entry name" value="DUF34_NIF3"/>
    <property type="match status" value="1"/>
</dbReference>
<dbReference type="SUPFAM" id="SSF102705">
    <property type="entry name" value="NIF3 (NGG1p interacting factor 3)-like"/>
    <property type="match status" value="1"/>
</dbReference>
<name>GCH1L_METJA</name>
<evidence type="ECO:0000250" key="1">
    <source>
        <dbReference type="UniProtKB" id="P0AFP6"/>
    </source>
</evidence>
<evidence type="ECO:0000269" key="2">
    <source>
    </source>
</evidence>
<evidence type="ECO:0000305" key="3"/>
<evidence type="ECO:0007829" key="4">
    <source>
        <dbReference type="PDB" id="4IWG"/>
    </source>
</evidence>
<feature type="chain" id="PRO_0000147348" description="GTP cyclohydrolase 1 type 2 homolog">
    <location>
        <begin position="1"/>
        <end position="244"/>
    </location>
</feature>
<feature type="binding site" evidence="1">
    <location>
        <position position="65"/>
    </location>
    <ligand>
        <name>a divalent metal cation</name>
        <dbReference type="ChEBI" id="CHEBI:60240"/>
        <label>1</label>
    </ligand>
</feature>
<feature type="binding site" evidence="1">
    <location>
        <position position="66"/>
    </location>
    <ligand>
        <name>a divalent metal cation</name>
        <dbReference type="ChEBI" id="CHEBI:60240"/>
        <label>2</label>
    </ligand>
</feature>
<feature type="binding site" evidence="1">
    <location>
        <position position="102"/>
    </location>
    <ligand>
        <name>a divalent metal cation</name>
        <dbReference type="ChEBI" id="CHEBI:60240"/>
        <label>1</label>
    </ligand>
</feature>
<feature type="binding site" evidence="1">
    <location>
        <position position="216"/>
    </location>
    <ligand>
        <name>a divalent metal cation</name>
        <dbReference type="ChEBI" id="CHEBI:60240"/>
        <label>2</label>
    </ligand>
</feature>
<feature type="binding site" evidence="1">
    <location>
        <position position="220"/>
    </location>
    <ligand>
        <name>a divalent metal cation</name>
        <dbReference type="ChEBI" id="CHEBI:60240"/>
        <label>1</label>
    </ligand>
</feature>
<feature type="binding site" evidence="1">
    <location>
        <position position="220"/>
    </location>
    <ligand>
        <name>a divalent metal cation</name>
        <dbReference type="ChEBI" id="CHEBI:60240"/>
        <label>2</label>
    </ligand>
</feature>
<feature type="helix" evidence="4">
    <location>
        <begin position="3"/>
        <end position="13"/>
    </location>
</feature>
<feature type="helix" evidence="4">
    <location>
        <begin position="16"/>
        <end position="18"/>
    </location>
</feature>
<feature type="strand" evidence="4">
    <location>
        <begin position="26"/>
        <end position="29"/>
    </location>
</feature>
<feature type="strand" evidence="4">
    <location>
        <begin position="39"/>
        <end position="44"/>
    </location>
</feature>
<feature type="helix" evidence="4">
    <location>
        <begin position="48"/>
        <end position="56"/>
    </location>
</feature>
<feature type="strand" evidence="4">
    <location>
        <begin position="60"/>
        <end position="66"/>
    </location>
</feature>
<feature type="helix" evidence="4">
    <location>
        <begin position="78"/>
        <end position="89"/>
    </location>
</feature>
<feature type="strand" evidence="4">
    <location>
        <begin position="93"/>
        <end position="96"/>
    </location>
</feature>
<feature type="helix" evidence="4">
    <location>
        <begin position="99"/>
        <end position="103"/>
    </location>
</feature>
<feature type="helix" evidence="4">
    <location>
        <begin position="108"/>
        <end position="115"/>
    </location>
</feature>
<feature type="strand" evidence="4">
    <location>
        <begin position="119"/>
        <end position="125"/>
    </location>
</feature>
<feature type="strand" evidence="4">
    <location>
        <begin position="131"/>
        <end position="134"/>
    </location>
</feature>
<feature type="helix" evidence="4">
    <location>
        <begin position="139"/>
        <end position="149"/>
    </location>
</feature>
<feature type="strand" evidence="4">
    <location>
        <begin position="155"/>
        <end position="157"/>
    </location>
</feature>
<feature type="strand" evidence="4">
    <location>
        <begin position="167"/>
        <end position="174"/>
    </location>
</feature>
<feature type="helix" evidence="4">
    <location>
        <begin position="178"/>
        <end position="184"/>
    </location>
</feature>
<feature type="turn" evidence="4">
    <location>
        <begin position="185"/>
        <end position="187"/>
    </location>
</feature>
<feature type="strand" evidence="4">
    <location>
        <begin position="189"/>
        <end position="194"/>
    </location>
</feature>
<feature type="helix" evidence="4">
    <location>
        <begin position="198"/>
        <end position="207"/>
    </location>
</feature>
<feature type="strand" evidence="4">
    <location>
        <begin position="210"/>
        <end position="213"/>
    </location>
</feature>
<feature type="helix" evidence="4">
    <location>
        <begin position="216"/>
        <end position="234"/>
    </location>
</feature>
<feature type="strand" evidence="4">
    <location>
        <begin position="237"/>
        <end position="242"/>
    </location>
</feature>
<organism>
    <name type="scientific">Methanocaldococcus jannaschii (strain ATCC 43067 / DSM 2661 / JAL-1 / JCM 10045 / NBRC 100440)</name>
    <name type="common">Methanococcus jannaschii</name>
    <dbReference type="NCBI Taxonomy" id="243232"/>
    <lineage>
        <taxon>Archaea</taxon>
        <taxon>Methanobacteriati</taxon>
        <taxon>Methanobacteriota</taxon>
        <taxon>Methanomada group</taxon>
        <taxon>Methanococci</taxon>
        <taxon>Methanococcales</taxon>
        <taxon>Methanocaldococcaceae</taxon>
        <taxon>Methanocaldococcus</taxon>
    </lineage>
</organism>
<protein>
    <recommendedName>
        <fullName>GTP cyclohydrolase 1 type 2 homolog</fullName>
    </recommendedName>
</protein>
<gene>
    <name type="ordered locus">MJ0927</name>
</gene>
<keyword id="KW-0002">3D-structure</keyword>
<keyword id="KW-0238">DNA-binding</keyword>
<keyword id="KW-0479">Metal-binding</keyword>
<keyword id="KW-1185">Reference proteome</keyword>